<gene>
    <name evidence="1" type="primary">rpl33</name>
</gene>
<dbReference type="EMBL" id="AJ627251">
    <property type="protein sequence ID" value="CAF28614.1"/>
    <property type="molecule type" value="Genomic_DNA"/>
</dbReference>
<dbReference type="RefSeq" id="YP_053176.1">
    <property type="nucleotide sequence ID" value="NC_006050.1"/>
</dbReference>
<dbReference type="GeneID" id="2896182"/>
<dbReference type="GO" id="GO:0009507">
    <property type="term" value="C:chloroplast"/>
    <property type="evidence" value="ECO:0007669"/>
    <property type="project" value="UniProtKB-SubCell"/>
</dbReference>
<dbReference type="GO" id="GO:1990904">
    <property type="term" value="C:ribonucleoprotein complex"/>
    <property type="evidence" value="ECO:0007669"/>
    <property type="project" value="UniProtKB-KW"/>
</dbReference>
<dbReference type="GO" id="GO:0005840">
    <property type="term" value="C:ribosome"/>
    <property type="evidence" value="ECO:0007669"/>
    <property type="project" value="UniProtKB-KW"/>
</dbReference>
<dbReference type="GO" id="GO:0003735">
    <property type="term" value="F:structural constituent of ribosome"/>
    <property type="evidence" value="ECO:0007669"/>
    <property type="project" value="InterPro"/>
</dbReference>
<dbReference type="GO" id="GO:0006412">
    <property type="term" value="P:translation"/>
    <property type="evidence" value="ECO:0007669"/>
    <property type="project" value="UniProtKB-UniRule"/>
</dbReference>
<dbReference type="Gene3D" id="2.20.28.120">
    <property type="entry name" value="Ribosomal protein L33"/>
    <property type="match status" value="1"/>
</dbReference>
<dbReference type="HAMAP" id="MF_00294">
    <property type="entry name" value="Ribosomal_bL33"/>
    <property type="match status" value="1"/>
</dbReference>
<dbReference type="InterPro" id="IPR001705">
    <property type="entry name" value="Ribosomal_bL33"/>
</dbReference>
<dbReference type="InterPro" id="IPR018264">
    <property type="entry name" value="Ribosomal_bL33_CS"/>
</dbReference>
<dbReference type="InterPro" id="IPR038584">
    <property type="entry name" value="Ribosomal_bL33_sf"/>
</dbReference>
<dbReference type="InterPro" id="IPR011332">
    <property type="entry name" value="Ribosomal_zn-bd"/>
</dbReference>
<dbReference type="NCBIfam" id="NF001764">
    <property type="entry name" value="PRK00504.1"/>
    <property type="match status" value="1"/>
</dbReference>
<dbReference type="NCBIfam" id="NF001860">
    <property type="entry name" value="PRK00595.1"/>
    <property type="match status" value="1"/>
</dbReference>
<dbReference type="NCBIfam" id="TIGR01023">
    <property type="entry name" value="rpmG_bact"/>
    <property type="match status" value="1"/>
</dbReference>
<dbReference type="PANTHER" id="PTHR43168">
    <property type="entry name" value="50S RIBOSOMAL PROTEIN L33, CHLOROPLASTIC"/>
    <property type="match status" value="1"/>
</dbReference>
<dbReference type="PANTHER" id="PTHR43168:SF2">
    <property type="entry name" value="LARGE RIBOSOMAL SUBUNIT PROTEIN BL33C"/>
    <property type="match status" value="1"/>
</dbReference>
<dbReference type="Pfam" id="PF00471">
    <property type="entry name" value="Ribosomal_L33"/>
    <property type="match status" value="1"/>
</dbReference>
<dbReference type="SUPFAM" id="SSF57829">
    <property type="entry name" value="Zn-binding ribosomal proteins"/>
    <property type="match status" value="1"/>
</dbReference>
<dbReference type="PROSITE" id="PS00582">
    <property type="entry name" value="RIBOSOMAL_L33"/>
    <property type="match status" value="1"/>
</dbReference>
<proteinExistence type="inferred from homology"/>
<geneLocation type="chloroplast"/>
<organism>
    <name type="scientific">Nymphaea alba</name>
    <name type="common">White water-lily</name>
    <name type="synonym">Castalia alba</name>
    <dbReference type="NCBI Taxonomy" id="34301"/>
    <lineage>
        <taxon>Eukaryota</taxon>
        <taxon>Viridiplantae</taxon>
        <taxon>Streptophyta</taxon>
        <taxon>Embryophyta</taxon>
        <taxon>Tracheophyta</taxon>
        <taxon>Spermatophyta</taxon>
        <taxon>Magnoliopsida</taxon>
        <taxon>Nymphaeales</taxon>
        <taxon>Nymphaeaceae</taxon>
        <taxon>Nymphaea</taxon>
    </lineage>
</organism>
<protein>
    <recommendedName>
        <fullName evidence="1">Large ribosomal subunit protein bL33c</fullName>
    </recommendedName>
    <alternativeName>
        <fullName evidence="2">50S ribosomal protein L33, chloroplastic</fullName>
    </alternativeName>
</protein>
<reference key="1">
    <citation type="journal article" date="2004" name="Mol. Biol. Evol.">
        <title>The chloroplast genome of Nymphaea alba: whole-genome analyses and the problem of identifying the most basal angiosperm.</title>
        <authorList>
            <person name="Goremykin V.V."/>
            <person name="Hirsch-Ernst K.I."/>
            <person name="Woelfl S."/>
            <person name="Hellwig F.H."/>
        </authorList>
    </citation>
    <scope>NUCLEOTIDE SEQUENCE [LARGE SCALE GENOMIC DNA]</scope>
</reference>
<accession>Q6EW32</accession>
<sequence>MPKGKNPRVTVILECTSCVRNGADKKKESPGISRYITQKNRHNTPGRLELKKFCPYCYKHTIHGEIKK</sequence>
<comment type="subcellular location">
    <subcellularLocation>
        <location>Plastid</location>
        <location>Chloroplast</location>
    </subcellularLocation>
</comment>
<comment type="similarity">
    <text evidence="1">Belongs to the bacterial ribosomal protein bL33 family.</text>
</comment>
<keyword id="KW-0150">Chloroplast</keyword>
<keyword id="KW-0934">Plastid</keyword>
<keyword id="KW-0687">Ribonucleoprotein</keyword>
<keyword id="KW-0689">Ribosomal protein</keyword>
<evidence type="ECO:0000255" key="1">
    <source>
        <dbReference type="HAMAP-Rule" id="MF_00294"/>
    </source>
</evidence>
<evidence type="ECO:0000305" key="2"/>
<name>RK33_NYMAL</name>
<feature type="chain" id="PRO_0000170289" description="Large ribosomal subunit protein bL33c">
    <location>
        <begin position="1"/>
        <end position="68"/>
    </location>
</feature>